<protein>
    <recommendedName>
        <fullName evidence="1">Endoribonuclease YbeY</fullName>
        <ecNumber evidence="1">3.1.-.-</ecNumber>
    </recommendedName>
</protein>
<dbReference type="EC" id="3.1.-.-" evidence="1"/>
<dbReference type="EMBL" id="BX571658">
    <property type="protein sequence ID" value="CAE09689.1"/>
    <property type="molecule type" value="Genomic_DNA"/>
</dbReference>
<dbReference type="RefSeq" id="WP_011138489.1">
    <property type="nucleotide sequence ID" value="NC_005090.1"/>
</dbReference>
<dbReference type="SMR" id="Q7MSD7"/>
<dbReference type="STRING" id="273121.WS0555"/>
<dbReference type="KEGG" id="wsu:WS0555"/>
<dbReference type="eggNOG" id="COG0319">
    <property type="taxonomic scope" value="Bacteria"/>
</dbReference>
<dbReference type="HOGENOM" id="CLU_106710_3_0_7"/>
<dbReference type="Proteomes" id="UP000000422">
    <property type="component" value="Chromosome"/>
</dbReference>
<dbReference type="GO" id="GO:0005737">
    <property type="term" value="C:cytoplasm"/>
    <property type="evidence" value="ECO:0007669"/>
    <property type="project" value="UniProtKB-SubCell"/>
</dbReference>
<dbReference type="GO" id="GO:0004222">
    <property type="term" value="F:metalloendopeptidase activity"/>
    <property type="evidence" value="ECO:0007669"/>
    <property type="project" value="InterPro"/>
</dbReference>
<dbReference type="GO" id="GO:0004521">
    <property type="term" value="F:RNA endonuclease activity"/>
    <property type="evidence" value="ECO:0007669"/>
    <property type="project" value="UniProtKB-UniRule"/>
</dbReference>
<dbReference type="GO" id="GO:0008270">
    <property type="term" value="F:zinc ion binding"/>
    <property type="evidence" value="ECO:0007669"/>
    <property type="project" value="UniProtKB-UniRule"/>
</dbReference>
<dbReference type="GO" id="GO:0006364">
    <property type="term" value="P:rRNA processing"/>
    <property type="evidence" value="ECO:0007669"/>
    <property type="project" value="UniProtKB-UniRule"/>
</dbReference>
<dbReference type="Gene3D" id="3.40.390.30">
    <property type="entry name" value="Metalloproteases ('zincins'), catalytic domain"/>
    <property type="match status" value="1"/>
</dbReference>
<dbReference type="HAMAP" id="MF_00009">
    <property type="entry name" value="Endoribonucl_YbeY"/>
    <property type="match status" value="1"/>
</dbReference>
<dbReference type="InterPro" id="IPR023091">
    <property type="entry name" value="MetalPrtase_cat_dom_sf_prd"/>
</dbReference>
<dbReference type="InterPro" id="IPR002036">
    <property type="entry name" value="YbeY"/>
</dbReference>
<dbReference type="InterPro" id="IPR020549">
    <property type="entry name" value="YbeY_CS"/>
</dbReference>
<dbReference type="NCBIfam" id="TIGR00043">
    <property type="entry name" value="rRNA maturation RNase YbeY"/>
    <property type="match status" value="1"/>
</dbReference>
<dbReference type="PANTHER" id="PTHR46986">
    <property type="entry name" value="ENDORIBONUCLEASE YBEY, CHLOROPLASTIC"/>
    <property type="match status" value="1"/>
</dbReference>
<dbReference type="PANTHER" id="PTHR46986:SF1">
    <property type="entry name" value="ENDORIBONUCLEASE YBEY, CHLOROPLASTIC"/>
    <property type="match status" value="1"/>
</dbReference>
<dbReference type="Pfam" id="PF02130">
    <property type="entry name" value="YbeY"/>
    <property type="match status" value="1"/>
</dbReference>
<dbReference type="SUPFAM" id="SSF55486">
    <property type="entry name" value="Metalloproteases ('zincins'), catalytic domain"/>
    <property type="match status" value="1"/>
</dbReference>
<dbReference type="PROSITE" id="PS01306">
    <property type="entry name" value="UPF0054"/>
    <property type="match status" value="1"/>
</dbReference>
<sequence length="140" mass="15923">MIDFDNQTDTNLDITLLESIATFLSPREVELILLDDEAMRKINQEHRGIDKSTDVLSFPLEGGDFLPLGSILLSIDRVRAEAELRGHSIEAEAALLFIHGMLHLLGYDHEYDQGEQRFKEEELITRFGLPSSLIVRTEEL</sequence>
<evidence type="ECO:0000255" key="1">
    <source>
        <dbReference type="HAMAP-Rule" id="MF_00009"/>
    </source>
</evidence>
<reference key="1">
    <citation type="journal article" date="2003" name="Proc. Natl. Acad. Sci. U.S.A.">
        <title>Complete genome sequence and analysis of Wolinella succinogenes.</title>
        <authorList>
            <person name="Baar C."/>
            <person name="Eppinger M."/>
            <person name="Raddatz G."/>
            <person name="Simon J."/>
            <person name="Lanz C."/>
            <person name="Klimmek O."/>
            <person name="Nandakumar R."/>
            <person name="Gross R."/>
            <person name="Rosinus A."/>
            <person name="Keller H."/>
            <person name="Jagtap P."/>
            <person name="Linke B."/>
            <person name="Meyer F."/>
            <person name="Lederer H."/>
            <person name="Schuster S.C."/>
        </authorList>
    </citation>
    <scope>NUCLEOTIDE SEQUENCE [LARGE SCALE GENOMIC DNA]</scope>
    <source>
        <strain>ATCC 29543 / DSM 1740 / CCUG 13145 / JCM 31913 / LMG 7466 / NCTC 11488 / FDC 602W</strain>
    </source>
</reference>
<accession>Q7MSD7</accession>
<keyword id="KW-0963">Cytoplasm</keyword>
<keyword id="KW-0255">Endonuclease</keyword>
<keyword id="KW-0378">Hydrolase</keyword>
<keyword id="KW-0479">Metal-binding</keyword>
<keyword id="KW-0540">Nuclease</keyword>
<keyword id="KW-1185">Reference proteome</keyword>
<keyword id="KW-0690">Ribosome biogenesis</keyword>
<keyword id="KW-0698">rRNA processing</keyword>
<keyword id="KW-0862">Zinc</keyword>
<feature type="chain" id="PRO_0000102569" description="Endoribonuclease YbeY">
    <location>
        <begin position="1"/>
        <end position="140"/>
    </location>
</feature>
<feature type="binding site" evidence="1">
    <location>
        <position position="99"/>
    </location>
    <ligand>
        <name>Zn(2+)</name>
        <dbReference type="ChEBI" id="CHEBI:29105"/>
        <note>catalytic</note>
    </ligand>
</feature>
<feature type="binding site" evidence="1">
    <location>
        <position position="103"/>
    </location>
    <ligand>
        <name>Zn(2+)</name>
        <dbReference type="ChEBI" id="CHEBI:29105"/>
        <note>catalytic</note>
    </ligand>
</feature>
<feature type="binding site" evidence="1">
    <location>
        <position position="109"/>
    </location>
    <ligand>
        <name>Zn(2+)</name>
        <dbReference type="ChEBI" id="CHEBI:29105"/>
        <note>catalytic</note>
    </ligand>
</feature>
<comment type="function">
    <text evidence="1">Single strand-specific metallo-endoribonuclease involved in late-stage 70S ribosome quality control and in maturation of the 3' terminus of the 16S rRNA.</text>
</comment>
<comment type="cofactor">
    <cofactor evidence="1">
        <name>Zn(2+)</name>
        <dbReference type="ChEBI" id="CHEBI:29105"/>
    </cofactor>
    <text evidence="1">Binds 1 zinc ion.</text>
</comment>
<comment type="subcellular location">
    <subcellularLocation>
        <location evidence="1">Cytoplasm</location>
    </subcellularLocation>
</comment>
<comment type="similarity">
    <text evidence="1">Belongs to the endoribonuclease YbeY family.</text>
</comment>
<proteinExistence type="inferred from homology"/>
<organism>
    <name type="scientific">Wolinella succinogenes (strain ATCC 29543 / DSM 1740 / CCUG 13145 / JCM 31913 / LMG 7466 / NCTC 11488 / FDC 602W)</name>
    <name type="common">Vibrio succinogenes</name>
    <dbReference type="NCBI Taxonomy" id="273121"/>
    <lineage>
        <taxon>Bacteria</taxon>
        <taxon>Pseudomonadati</taxon>
        <taxon>Campylobacterota</taxon>
        <taxon>Epsilonproteobacteria</taxon>
        <taxon>Campylobacterales</taxon>
        <taxon>Helicobacteraceae</taxon>
        <taxon>Wolinella</taxon>
    </lineage>
</organism>
<gene>
    <name evidence="1" type="primary">ybeY</name>
    <name type="ordered locus">WS0555</name>
</gene>
<name>YBEY_WOLSU</name>